<feature type="chain" id="PRO_1000198512" description="Ribosomal RNA small subunit methyltransferase J">
    <location>
        <begin position="1"/>
        <end position="252"/>
    </location>
</feature>
<feature type="binding site" evidence="1">
    <location>
        <begin position="101"/>
        <end position="102"/>
    </location>
    <ligand>
        <name>S-adenosyl-L-methionine</name>
        <dbReference type="ChEBI" id="CHEBI:59789"/>
    </ligand>
</feature>
<feature type="binding site" evidence="1">
    <location>
        <begin position="117"/>
        <end position="118"/>
    </location>
    <ligand>
        <name>S-adenosyl-L-methionine</name>
        <dbReference type="ChEBI" id="CHEBI:59789"/>
    </ligand>
</feature>
<feature type="binding site" evidence="1">
    <location>
        <begin position="153"/>
        <end position="154"/>
    </location>
    <ligand>
        <name>S-adenosyl-L-methionine</name>
        <dbReference type="ChEBI" id="CHEBI:59789"/>
    </ligand>
</feature>
<feature type="binding site" evidence="1">
    <location>
        <position position="171"/>
    </location>
    <ligand>
        <name>S-adenosyl-L-methionine</name>
        <dbReference type="ChEBI" id="CHEBI:59789"/>
    </ligand>
</feature>
<proteinExistence type="inferred from homology"/>
<protein>
    <recommendedName>
        <fullName evidence="1">Ribosomal RNA small subunit methyltransferase J</fullName>
        <ecNumber evidence="1">2.1.1.242</ecNumber>
    </recommendedName>
    <alternativeName>
        <fullName evidence="1">16S rRNA m2G1516 methyltransferase</fullName>
    </alternativeName>
    <alternativeName>
        <fullName evidence="1">rRNA (guanine-N(2)-)-methyltransferase</fullName>
    </alternativeName>
</protein>
<gene>
    <name evidence="1" type="primary">rsmJ</name>
    <name type="synonym">yhiQ</name>
    <name type="ordered locus">SSPA3222</name>
</gene>
<comment type="function">
    <text evidence="1">Specifically methylates the guanosine in position 1516 of 16S rRNA.</text>
</comment>
<comment type="catalytic activity">
    <reaction evidence="1">
        <text>guanosine(1516) in 16S rRNA + S-adenosyl-L-methionine = N(2)-methylguanosine(1516) in 16S rRNA + S-adenosyl-L-homocysteine + H(+)</text>
        <dbReference type="Rhea" id="RHEA:43220"/>
        <dbReference type="Rhea" id="RHEA-COMP:10412"/>
        <dbReference type="Rhea" id="RHEA-COMP:10413"/>
        <dbReference type="ChEBI" id="CHEBI:15378"/>
        <dbReference type="ChEBI" id="CHEBI:57856"/>
        <dbReference type="ChEBI" id="CHEBI:59789"/>
        <dbReference type="ChEBI" id="CHEBI:74269"/>
        <dbReference type="ChEBI" id="CHEBI:74481"/>
        <dbReference type="EC" id="2.1.1.242"/>
    </reaction>
</comment>
<comment type="subcellular location">
    <subcellularLocation>
        <location evidence="1">Cytoplasm</location>
    </subcellularLocation>
</comment>
<comment type="similarity">
    <text evidence="1">Belongs to the methyltransferase superfamily. RsmJ family.</text>
</comment>
<keyword id="KW-0963">Cytoplasm</keyword>
<keyword id="KW-0489">Methyltransferase</keyword>
<keyword id="KW-0698">rRNA processing</keyword>
<keyword id="KW-0949">S-adenosyl-L-methionine</keyword>
<keyword id="KW-0808">Transferase</keyword>
<reference key="1">
    <citation type="journal article" date="2009" name="BMC Genomics">
        <title>Pseudogene accumulation in the evolutionary histories of Salmonella enterica serovars Paratyphi A and Typhi.</title>
        <authorList>
            <person name="Holt K.E."/>
            <person name="Thomson N.R."/>
            <person name="Wain J."/>
            <person name="Langridge G.C."/>
            <person name="Hasan R."/>
            <person name="Bhutta Z.A."/>
            <person name="Quail M.A."/>
            <person name="Norbertczak H."/>
            <person name="Walker D."/>
            <person name="Simmonds M."/>
            <person name="White B."/>
            <person name="Bason N."/>
            <person name="Mungall K."/>
            <person name="Dougan G."/>
            <person name="Parkhill J."/>
        </authorList>
    </citation>
    <scope>NUCLEOTIDE SEQUENCE [LARGE SCALE GENOMIC DNA]</scope>
    <source>
        <strain>AKU_12601</strain>
    </source>
</reference>
<accession>B5BHN9</accession>
<name>RSMJ_SALPK</name>
<organism>
    <name type="scientific">Salmonella paratyphi A (strain AKU_12601)</name>
    <dbReference type="NCBI Taxonomy" id="554290"/>
    <lineage>
        <taxon>Bacteria</taxon>
        <taxon>Pseudomonadati</taxon>
        <taxon>Pseudomonadota</taxon>
        <taxon>Gammaproteobacteria</taxon>
        <taxon>Enterobacterales</taxon>
        <taxon>Enterobacteriaceae</taxon>
        <taxon>Salmonella</taxon>
    </lineage>
</organism>
<evidence type="ECO:0000255" key="1">
    <source>
        <dbReference type="HAMAP-Rule" id="MF_01523"/>
    </source>
</evidence>
<dbReference type="EC" id="2.1.1.242" evidence="1"/>
<dbReference type="EMBL" id="FM200053">
    <property type="protein sequence ID" value="CAR61478.1"/>
    <property type="molecule type" value="Genomic_DNA"/>
</dbReference>
<dbReference type="RefSeq" id="WP_001165127.1">
    <property type="nucleotide sequence ID" value="NC_011147.1"/>
</dbReference>
<dbReference type="SMR" id="B5BHN9"/>
<dbReference type="KEGG" id="sek:SSPA3222"/>
<dbReference type="HOGENOM" id="CLU_076324_0_0_6"/>
<dbReference type="Proteomes" id="UP000001869">
    <property type="component" value="Chromosome"/>
</dbReference>
<dbReference type="GO" id="GO:0005737">
    <property type="term" value="C:cytoplasm"/>
    <property type="evidence" value="ECO:0007669"/>
    <property type="project" value="UniProtKB-SubCell"/>
</dbReference>
<dbReference type="GO" id="GO:0008990">
    <property type="term" value="F:rRNA (guanine-N2-)-methyltransferase activity"/>
    <property type="evidence" value="ECO:0007669"/>
    <property type="project" value="UniProtKB-UniRule"/>
</dbReference>
<dbReference type="CDD" id="cd02440">
    <property type="entry name" value="AdoMet_MTases"/>
    <property type="match status" value="1"/>
</dbReference>
<dbReference type="FunFam" id="3.40.1630.10:FF:000001">
    <property type="entry name" value="Ribosomal RNA small subunit methyltransferase J"/>
    <property type="match status" value="1"/>
</dbReference>
<dbReference type="FunFam" id="3.40.50.150:FF:000072">
    <property type="entry name" value="Ribosomal RNA small subunit methyltransferase J"/>
    <property type="match status" value="1"/>
</dbReference>
<dbReference type="Gene3D" id="3.40.50.150">
    <property type="entry name" value="Vaccinia Virus protein VP39"/>
    <property type="match status" value="1"/>
</dbReference>
<dbReference type="Gene3D" id="3.40.1630.10">
    <property type="entry name" value="YhiQ-like domain"/>
    <property type="match status" value="1"/>
</dbReference>
<dbReference type="HAMAP" id="MF_01523">
    <property type="entry name" value="16SrRNA_methyltr_J"/>
    <property type="match status" value="1"/>
</dbReference>
<dbReference type="InterPro" id="IPR007536">
    <property type="entry name" value="16SrRNA_methylTrfase_J"/>
</dbReference>
<dbReference type="InterPro" id="IPR029063">
    <property type="entry name" value="SAM-dependent_MTases_sf"/>
</dbReference>
<dbReference type="NCBIfam" id="NF008012">
    <property type="entry name" value="PRK10742.1"/>
    <property type="match status" value="1"/>
</dbReference>
<dbReference type="PANTHER" id="PTHR36112">
    <property type="entry name" value="RIBOSOMAL RNA SMALL SUBUNIT METHYLTRANSFERASE J"/>
    <property type="match status" value="1"/>
</dbReference>
<dbReference type="PANTHER" id="PTHR36112:SF1">
    <property type="entry name" value="RIBOSOMAL RNA SMALL SUBUNIT METHYLTRANSFERASE J"/>
    <property type="match status" value="1"/>
</dbReference>
<dbReference type="Pfam" id="PF04445">
    <property type="entry name" value="SAM_MT"/>
    <property type="match status" value="1"/>
</dbReference>
<dbReference type="SUPFAM" id="SSF53335">
    <property type="entry name" value="S-adenosyl-L-methionine-dependent methyltransferases"/>
    <property type="match status" value="1"/>
</dbReference>
<sequence>MQICLMDETGATDGALSVLAARWGLEHDEDNPMALVLTPQHLELRKRDEPKLGGIFVDFVGGAMAHRRKFGGGRGEAVAKAVGIKGDYLPDVVDATAGLGRDAFVLASVGCRVRMLERNPVVAALLDDGLTRGYADADIGGWLQERLQLIHASSLTALTDITPRPQVVYLDPMFPHRQKSALVKKEMRVFQSLVGPDLDADGLLEPARQLATKRVVVKRPDYAPPLADVATPNAIVTKGHRFDIYAGTPLTE</sequence>